<organism>
    <name type="scientific">Rickettsia rickettsii (strain Iowa)</name>
    <dbReference type="NCBI Taxonomy" id="452659"/>
    <lineage>
        <taxon>Bacteria</taxon>
        <taxon>Pseudomonadati</taxon>
        <taxon>Pseudomonadota</taxon>
        <taxon>Alphaproteobacteria</taxon>
        <taxon>Rickettsiales</taxon>
        <taxon>Rickettsiaceae</taxon>
        <taxon>Rickettsieae</taxon>
        <taxon>Rickettsia</taxon>
        <taxon>spotted fever group</taxon>
    </lineage>
</organism>
<proteinExistence type="inferred from homology"/>
<accession>B0BW80</accession>
<sequence>MSEVVIKEQLEQYISKIERLEQEKADLSQEVKDIFQDASSHGFDVKAMKSILKLKKLDKDKLAEQDAMLELYRDTLGI</sequence>
<name>Y193_RICRO</name>
<protein>
    <recommendedName>
        <fullName evidence="1">UPF0335 protein RrIowa_0193</fullName>
    </recommendedName>
</protein>
<feature type="chain" id="PRO_1000083688" description="UPF0335 protein RrIowa_0193">
    <location>
        <begin position="1"/>
        <end position="78"/>
    </location>
</feature>
<reference key="1">
    <citation type="journal article" date="2008" name="Infect. Immun.">
        <title>Genomic comparison of virulent Rickettsia rickettsii Sheila Smith and avirulent Rickettsia rickettsii Iowa.</title>
        <authorList>
            <person name="Ellison D.W."/>
            <person name="Clark T.R."/>
            <person name="Sturdevant D.E."/>
            <person name="Virtaneva K."/>
            <person name="Porcella S.F."/>
            <person name="Hackstadt T."/>
        </authorList>
    </citation>
    <scope>NUCLEOTIDE SEQUENCE [LARGE SCALE GENOMIC DNA]</scope>
    <source>
        <strain>Iowa</strain>
    </source>
</reference>
<evidence type="ECO:0000255" key="1">
    <source>
        <dbReference type="HAMAP-Rule" id="MF_00797"/>
    </source>
</evidence>
<dbReference type="EMBL" id="CP000766">
    <property type="protein sequence ID" value="ABY72106.1"/>
    <property type="molecule type" value="Genomic_DNA"/>
</dbReference>
<dbReference type="RefSeq" id="WP_012150371.1">
    <property type="nucleotide sequence ID" value="NC_010263.3"/>
</dbReference>
<dbReference type="SMR" id="B0BW80"/>
<dbReference type="KEGG" id="rrj:RrIowa_0193"/>
<dbReference type="eggNOG" id="COG3750">
    <property type="taxonomic scope" value="Bacteria"/>
</dbReference>
<dbReference type="HOGENOM" id="CLU_158651_4_0_5"/>
<dbReference type="Proteomes" id="UP000000796">
    <property type="component" value="Chromosome"/>
</dbReference>
<dbReference type="GO" id="GO:0003677">
    <property type="term" value="F:DNA binding"/>
    <property type="evidence" value="ECO:0007669"/>
    <property type="project" value="InterPro"/>
</dbReference>
<dbReference type="HAMAP" id="MF_00797">
    <property type="entry name" value="UPF0335"/>
    <property type="match status" value="1"/>
</dbReference>
<dbReference type="InterPro" id="IPR018753">
    <property type="entry name" value="GapR-like"/>
</dbReference>
<dbReference type="InterPro" id="IPR046367">
    <property type="entry name" value="GapR-like_DNA-bd"/>
</dbReference>
<dbReference type="NCBIfam" id="NF010247">
    <property type="entry name" value="PRK13694.1"/>
    <property type="match status" value="1"/>
</dbReference>
<dbReference type="Pfam" id="PF10073">
    <property type="entry name" value="GapR_DNA-bd"/>
    <property type="match status" value="1"/>
</dbReference>
<comment type="similarity">
    <text evidence="1">Belongs to the UPF0335 family.</text>
</comment>
<gene>
    <name type="ordered locus">RrIowa_0193</name>
</gene>